<proteinExistence type="predicted"/>
<keyword id="KW-0614">Plasmid</keyword>
<protein>
    <recommendedName>
        <fullName>Uncharacterized protein YubE</fullName>
    </recommendedName>
</protein>
<name>YUBE_ECOLI</name>
<gene>
    <name type="primary">yubE</name>
    <name type="synonym">yfeB</name>
    <name type="ordered locus">ECOK12F053</name>
</gene>
<organism>
    <name type="scientific">Escherichia coli (strain K12)</name>
    <dbReference type="NCBI Taxonomy" id="83333"/>
    <lineage>
        <taxon>Bacteria</taxon>
        <taxon>Pseudomonadati</taxon>
        <taxon>Pseudomonadota</taxon>
        <taxon>Gammaproteobacteria</taxon>
        <taxon>Enterobacterales</taxon>
        <taxon>Enterobacteriaceae</taxon>
        <taxon>Escherichia</taxon>
    </lineage>
</organism>
<reference key="1">
    <citation type="journal article" date="1999" name="Plasmid">
        <title>Nucleotide sequence of the F plasmid leading region.</title>
        <authorList>
            <person name="Manwaring N.P."/>
            <person name="Skurray R.A."/>
            <person name="Firth N."/>
        </authorList>
    </citation>
    <scope>NUCLEOTIDE SEQUENCE [GENOMIC DNA]</scope>
</reference>
<reference key="2">
    <citation type="submission" date="2000-04" db="EMBL/GenBank/DDBJ databases">
        <title>Complete nucleotide sequence of the F plasmid: its implications for organization and diversification of plasmid genomes.</title>
        <authorList>
            <person name="Shimizu H."/>
            <person name="Saitoh Y."/>
            <person name="Suda Y."/>
            <person name="Uehara K."/>
            <person name="Sampei G."/>
            <person name="Mizobuchi K."/>
        </authorList>
    </citation>
    <scope>NUCLEOTIDE SEQUENCE [LARGE SCALE GENOMIC DNA]</scope>
    <source>
        <strain>K12 / CR63</strain>
    </source>
</reference>
<dbReference type="EMBL" id="AF106329">
    <property type="protein sequence ID" value="AAD47179.1"/>
    <property type="molecule type" value="Genomic_DNA"/>
</dbReference>
<dbReference type="EMBL" id="AP001918">
    <property type="protein sequence ID" value="BAA97923.1"/>
    <property type="molecule type" value="Genomic_DNA"/>
</dbReference>
<dbReference type="RefSeq" id="NP_061432.1">
    <property type="nucleotide sequence ID" value="NC_002483.1"/>
</dbReference>
<dbReference type="RefSeq" id="WP_001104904.1">
    <property type="nucleotide sequence ID" value="NZ_JACEFS010000057.1"/>
</dbReference>
<dbReference type="SMR" id="Q9S4X1"/>
<dbReference type="KEGG" id="ecoc:C3026_24365"/>
<feature type="chain" id="PRO_0000262310" description="Uncharacterized protein YubE">
    <location>
        <begin position="1"/>
        <end position="73"/>
    </location>
</feature>
<sequence>MNYAGHKKLRADVAEVANTMCDLRARLNDMEHRCRFDSDVLVERLARQTLYRANRLFMEAYTEILELDACFKD</sequence>
<geneLocation type="plasmid">
    <name>F</name>
</geneLocation>
<accession>Q9S4X1</accession>
<accession>Q7AJQ4</accession>